<protein>
    <recommendedName>
        <fullName>Transcription factor MafA</fullName>
    </recommendedName>
    <alternativeName>
        <fullName>Pancreatic beta-cell-specific transcriptional activator</fullName>
    </alternativeName>
    <alternativeName>
        <fullName evidence="10">RIPE3b1 factor</fullName>
    </alternativeName>
    <alternativeName>
        <fullName>V-maf musculoaponeurotic fibrosarcoma oncogene homolog A</fullName>
    </alternativeName>
</protein>
<gene>
    <name type="primary">MAFA</name>
</gene>
<evidence type="ECO:0000250" key="1">
    <source>
        <dbReference type="UniProtKB" id="O57342"/>
    </source>
</evidence>
<evidence type="ECO:0000250" key="2">
    <source>
        <dbReference type="UniProtKB" id="Q8CF90"/>
    </source>
</evidence>
<evidence type="ECO:0000255" key="3">
    <source>
        <dbReference type="PROSITE-ProRule" id="PRU00978"/>
    </source>
</evidence>
<evidence type="ECO:0000256" key="4">
    <source>
        <dbReference type="SAM" id="MobiDB-lite"/>
    </source>
</evidence>
<evidence type="ECO:0000269" key="5">
    <source>
    </source>
</evidence>
<evidence type="ECO:0000269" key="6">
    <source>
    </source>
</evidence>
<evidence type="ECO:0000269" key="7">
    <source>
    </source>
</evidence>
<evidence type="ECO:0000269" key="8">
    <source>
    </source>
</evidence>
<evidence type="ECO:0000269" key="9">
    <source>
    </source>
</evidence>
<evidence type="ECO:0000303" key="10">
    <source>
    </source>
</evidence>
<evidence type="ECO:0000305" key="11"/>
<evidence type="ECO:0007744" key="12">
    <source>
    </source>
</evidence>
<evidence type="ECO:0007829" key="13">
    <source>
        <dbReference type="PDB" id="4EOT"/>
    </source>
</evidence>
<sequence>MAAELAMGAELPSSPLAIEYVNDFDLMKFEVKKEPPEAERFCHRLPPGSLSSTPLSTPCSSVPSSPSFCAPSPGTGGGGGAGGGGGSSQAGGAPGPPSGGPGAVGGTSGKPALEDLYWMSGYQHHLNPEALNLTPEDAVEALIGSGHHGAHHGAHHPAAAAAYEAFRGPGFAGGGGADDMGAGHHHGAHHAAHHHHAAHHHHHHHHHHGGAGHGGGAGHHVRLEERFSDDQLVSMSVRELNRQLRGFSKEEVIRLKQKRRTLKNRGYAQSCRFKRVQQRHILESEKCQLQSQVEQLKLEVGRLAKERDLYKEKYEKLAGRGGPGSAGGAGFPREPSPPQAGPGGAKGTADFFL</sequence>
<dbReference type="EMBL" id="AB086960">
    <property type="protein sequence ID" value="BAC20389.1"/>
    <property type="molecule type" value="Genomic_DNA"/>
</dbReference>
<dbReference type="EMBL" id="AY083269">
    <property type="protein sequence ID" value="AAL89527.1"/>
    <property type="molecule type" value="Genomic_DNA"/>
</dbReference>
<dbReference type="EMBL" id="AC105118">
    <property type="status" value="NOT_ANNOTATED_CDS"/>
    <property type="molecule type" value="Genomic_DNA"/>
</dbReference>
<dbReference type="CCDS" id="CCDS34955.1"/>
<dbReference type="RefSeq" id="NP_963883.2">
    <property type="nucleotide sequence ID" value="NM_201589.4"/>
</dbReference>
<dbReference type="PDB" id="4EOT">
    <property type="method" value="X-ray"/>
    <property type="resolution" value="2.86 A"/>
    <property type="chains" value="A/B=226-318"/>
</dbReference>
<dbReference type="PDBsum" id="4EOT"/>
<dbReference type="SMR" id="Q8NHW3"/>
<dbReference type="BioGRID" id="133233">
    <property type="interactions" value="16"/>
</dbReference>
<dbReference type="CORUM" id="Q8NHW3"/>
<dbReference type="FunCoup" id="Q8NHW3">
    <property type="interactions" value="854"/>
</dbReference>
<dbReference type="IntAct" id="Q8NHW3">
    <property type="interactions" value="2"/>
</dbReference>
<dbReference type="STRING" id="9606.ENSP00000328364"/>
<dbReference type="GlyGen" id="Q8NHW3">
    <property type="glycosylation" value="2 sites, 1 O-linked glycan (1 site)"/>
</dbReference>
<dbReference type="iPTMnet" id="Q8NHW3"/>
<dbReference type="PhosphoSitePlus" id="Q8NHW3"/>
<dbReference type="BioMuta" id="MAFA"/>
<dbReference type="DMDM" id="296435511"/>
<dbReference type="MassIVE" id="Q8NHW3"/>
<dbReference type="PaxDb" id="9606-ENSP00000328364"/>
<dbReference type="PeptideAtlas" id="Q8NHW3"/>
<dbReference type="ProteomicsDB" id="73768"/>
<dbReference type="TopDownProteomics" id="Q8NHW3"/>
<dbReference type="Antibodypedia" id="14595">
    <property type="antibodies" value="257 antibodies from 27 providers"/>
</dbReference>
<dbReference type="DNASU" id="389692"/>
<dbReference type="Ensembl" id="ENST00000333480.3">
    <property type="protein sequence ID" value="ENSP00000328364.2"/>
    <property type="gene ID" value="ENSG00000182759.4"/>
</dbReference>
<dbReference type="GeneID" id="389692"/>
<dbReference type="KEGG" id="hsa:389692"/>
<dbReference type="MANE-Select" id="ENST00000333480.3">
    <property type="protein sequence ID" value="ENSP00000328364.2"/>
    <property type="RefSeq nucleotide sequence ID" value="NM_201589.4"/>
    <property type="RefSeq protein sequence ID" value="NP_963883.2"/>
</dbReference>
<dbReference type="UCSC" id="uc003yyc.3">
    <property type="organism name" value="human"/>
</dbReference>
<dbReference type="AGR" id="HGNC:23145"/>
<dbReference type="CTD" id="389692"/>
<dbReference type="DisGeNET" id="389692"/>
<dbReference type="GeneCards" id="MAFA"/>
<dbReference type="HGNC" id="HGNC:23145">
    <property type="gene designation" value="MAFA"/>
</dbReference>
<dbReference type="HPA" id="ENSG00000182759">
    <property type="expression patterns" value="Tissue enriched (skeletal)"/>
</dbReference>
<dbReference type="MalaCards" id="MAFA"/>
<dbReference type="MIM" id="147630">
    <property type="type" value="phenotype"/>
</dbReference>
<dbReference type="MIM" id="610303">
    <property type="type" value="gene"/>
</dbReference>
<dbReference type="neXtProt" id="NX_Q8NHW3"/>
<dbReference type="OpenTargets" id="ENSG00000182759"/>
<dbReference type="PharmGKB" id="PA134963361"/>
<dbReference type="VEuPathDB" id="HostDB:ENSG00000182759"/>
<dbReference type="eggNOG" id="KOG4196">
    <property type="taxonomic scope" value="Eukaryota"/>
</dbReference>
<dbReference type="GeneTree" id="ENSGT00940000162747"/>
<dbReference type="HOGENOM" id="CLU_063062_0_0_1"/>
<dbReference type="InParanoid" id="Q8NHW3"/>
<dbReference type="OMA" id="SYQHHLN"/>
<dbReference type="OrthoDB" id="5974330at2759"/>
<dbReference type="PAN-GO" id="Q8NHW3">
    <property type="GO annotations" value="6 GO annotations based on evolutionary models"/>
</dbReference>
<dbReference type="PhylomeDB" id="Q8NHW3"/>
<dbReference type="TreeFam" id="TF325689"/>
<dbReference type="PathwayCommons" id="Q8NHW3"/>
<dbReference type="Reactome" id="R-HSA-210745">
    <property type="pathway name" value="Regulation of gene expression in beta cells"/>
</dbReference>
<dbReference type="SignaLink" id="Q8NHW3"/>
<dbReference type="SIGNOR" id="Q8NHW3"/>
<dbReference type="BioGRID-ORCS" id="389692">
    <property type="hits" value="19 hits in 1165 CRISPR screens"/>
</dbReference>
<dbReference type="EvolutionaryTrace" id="Q8NHW3"/>
<dbReference type="GeneWiki" id="MAFA_(gene)"/>
<dbReference type="GenomeRNAi" id="389692"/>
<dbReference type="Pharos" id="Q8NHW3">
    <property type="development level" value="Tbio"/>
</dbReference>
<dbReference type="PRO" id="PR:Q8NHW3"/>
<dbReference type="Proteomes" id="UP000005640">
    <property type="component" value="Chromosome 8"/>
</dbReference>
<dbReference type="RNAct" id="Q8NHW3">
    <property type="molecule type" value="protein"/>
</dbReference>
<dbReference type="Bgee" id="ENSG00000182759">
    <property type="expression patterns" value="Expressed in hindlimb stylopod muscle and 68 other cell types or tissues"/>
</dbReference>
<dbReference type="GO" id="GO:0000785">
    <property type="term" value="C:chromatin"/>
    <property type="evidence" value="ECO:0000247"/>
    <property type="project" value="NTNU_SB"/>
</dbReference>
<dbReference type="GO" id="GO:0005634">
    <property type="term" value="C:nucleus"/>
    <property type="evidence" value="ECO:0000314"/>
    <property type="project" value="UniProtKB"/>
</dbReference>
<dbReference type="GO" id="GO:0003677">
    <property type="term" value="F:DNA binding"/>
    <property type="evidence" value="ECO:0000314"/>
    <property type="project" value="UniProtKB"/>
</dbReference>
<dbReference type="GO" id="GO:0001228">
    <property type="term" value="F:DNA-binding transcription activator activity, RNA polymerase II-specific"/>
    <property type="evidence" value="ECO:0007669"/>
    <property type="project" value="Ensembl"/>
</dbReference>
<dbReference type="GO" id="GO:0003700">
    <property type="term" value="F:DNA-binding transcription factor activity"/>
    <property type="evidence" value="ECO:0000314"/>
    <property type="project" value="BHF-UCL"/>
</dbReference>
<dbReference type="GO" id="GO:0000981">
    <property type="term" value="F:DNA-binding transcription factor activity, RNA polymerase II-specific"/>
    <property type="evidence" value="ECO:0000247"/>
    <property type="project" value="NTNU_SB"/>
</dbReference>
<dbReference type="GO" id="GO:0000978">
    <property type="term" value="F:RNA polymerase II cis-regulatory region sequence-specific DNA binding"/>
    <property type="evidence" value="ECO:0000318"/>
    <property type="project" value="GO_Central"/>
</dbReference>
<dbReference type="GO" id="GO:1990837">
    <property type="term" value="F:sequence-specific double-stranded DNA binding"/>
    <property type="evidence" value="ECO:0000314"/>
    <property type="project" value="ARUK-UCL"/>
</dbReference>
<dbReference type="GO" id="GO:0030073">
    <property type="term" value="P:insulin secretion"/>
    <property type="evidence" value="ECO:0000314"/>
    <property type="project" value="BHF-UCL"/>
</dbReference>
<dbReference type="GO" id="GO:0045944">
    <property type="term" value="P:positive regulation of transcription by RNA polymerase II"/>
    <property type="evidence" value="ECO:0000314"/>
    <property type="project" value="BHF-UCL"/>
</dbReference>
<dbReference type="GO" id="GO:0006355">
    <property type="term" value="P:regulation of DNA-templated transcription"/>
    <property type="evidence" value="ECO:0000304"/>
    <property type="project" value="UniProtKB"/>
</dbReference>
<dbReference type="GO" id="GO:0006357">
    <property type="term" value="P:regulation of transcription by RNA polymerase II"/>
    <property type="evidence" value="ECO:0000318"/>
    <property type="project" value="GO_Central"/>
</dbReference>
<dbReference type="GO" id="GO:0009749">
    <property type="term" value="P:response to glucose"/>
    <property type="evidence" value="ECO:0000314"/>
    <property type="project" value="UniProtKB"/>
</dbReference>
<dbReference type="CDD" id="cd14718">
    <property type="entry name" value="bZIP_Maf_large"/>
    <property type="match status" value="1"/>
</dbReference>
<dbReference type="FunFam" id="1.20.5.170:FF:000016">
    <property type="entry name" value="MAF bZIP transcription factor"/>
    <property type="match status" value="1"/>
</dbReference>
<dbReference type="Gene3D" id="1.20.5.170">
    <property type="match status" value="1"/>
</dbReference>
<dbReference type="InterPro" id="IPR004827">
    <property type="entry name" value="bZIP"/>
</dbReference>
<dbReference type="InterPro" id="IPR004826">
    <property type="entry name" value="bZIP_Maf"/>
</dbReference>
<dbReference type="InterPro" id="IPR046347">
    <property type="entry name" value="bZIP_sf"/>
</dbReference>
<dbReference type="InterPro" id="IPR013592">
    <property type="entry name" value="Maf_TF_N"/>
</dbReference>
<dbReference type="InterPro" id="IPR008917">
    <property type="entry name" value="TF_DNA-bd_sf"/>
</dbReference>
<dbReference type="InterPro" id="IPR024874">
    <property type="entry name" value="Transcription_factor_Maf_fam"/>
</dbReference>
<dbReference type="PANTHER" id="PTHR10129">
    <property type="entry name" value="TRANSCRIPTION FACTOR MAF"/>
    <property type="match status" value="1"/>
</dbReference>
<dbReference type="PANTHER" id="PTHR10129:SF30">
    <property type="entry name" value="TRANSCRIPTION FACTOR MAFA"/>
    <property type="match status" value="1"/>
</dbReference>
<dbReference type="Pfam" id="PF03131">
    <property type="entry name" value="bZIP_Maf"/>
    <property type="match status" value="1"/>
</dbReference>
<dbReference type="Pfam" id="PF08383">
    <property type="entry name" value="Maf_N"/>
    <property type="match status" value="1"/>
</dbReference>
<dbReference type="SMART" id="SM00338">
    <property type="entry name" value="BRLZ"/>
    <property type="match status" value="1"/>
</dbReference>
<dbReference type="SUPFAM" id="SSF47454">
    <property type="entry name" value="A DNA-binding domain in eukaryotic transcription factors"/>
    <property type="match status" value="1"/>
</dbReference>
<dbReference type="SUPFAM" id="SSF57959">
    <property type="entry name" value="Leucine zipper domain"/>
    <property type="match status" value="1"/>
</dbReference>
<dbReference type="PROSITE" id="PS50217">
    <property type="entry name" value="BZIP"/>
    <property type="match status" value="1"/>
</dbReference>
<reference key="1">
    <citation type="journal article" date="2002" name="J. Biol. Chem.">
        <title>MafA is a glucose-regulated and pancreatic beta-cell-specific transcriptional activator for the insulin gene.</title>
        <authorList>
            <person name="Kataoka K."/>
            <person name="Han S.I."/>
            <person name="Shioda S."/>
            <person name="Hirai M."/>
            <person name="Nishizawa M."/>
            <person name="Handa H."/>
        </authorList>
    </citation>
    <scope>NUCLEOTIDE SEQUENCE [GENOMIC DNA]</scope>
</reference>
<reference key="2">
    <citation type="journal article" date="2002" name="Proc. Natl. Acad. Sci. U.S.A.">
        <title>Identification of beta-cell-specific insulin gene transcription factor RIPE3b1 as mammalian MafA.</title>
        <authorList>
            <person name="Olbrot M."/>
            <person name="Rud J."/>
            <person name="Moss L.G."/>
            <person name="Sharma A."/>
        </authorList>
    </citation>
    <scope>NUCLEOTIDE SEQUENCE [GENOMIC DNA]</scope>
    <scope>FUNCTION</scope>
    <scope>HOMODIMERIZATION</scope>
    <scope>SUBCELLULAR LOCATION</scope>
</reference>
<reference key="3">
    <citation type="journal article" date="2006" name="Nature">
        <title>DNA sequence and analysis of human chromosome 8.</title>
        <authorList>
            <person name="Nusbaum C."/>
            <person name="Mikkelsen T.S."/>
            <person name="Zody M.C."/>
            <person name="Asakawa S."/>
            <person name="Taudien S."/>
            <person name="Garber M."/>
            <person name="Kodira C.D."/>
            <person name="Schueler M.G."/>
            <person name="Shimizu A."/>
            <person name="Whittaker C.A."/>
            <person name="Chang J.L."/>
            <person name="Cuomo C.A."/>
            <person name="Dewar K."/>
            <person name="FitzGerald M.G."/>
            <person name="Yang X."/>
            <person name="Allen N.R."/>
            <person name="Anderson S."/>
            <person name="Asakawa T."/>
            <person name="Blechschmidt K."/>
            <person name="Bloom T."/>
            <person name="Borowsky M.L."/>
            <person name="Butler J."/>
            <person name="Cook A."/>
            <person name="Corum B."/>
            <person name="DeArellano K."/>
            <person name="DeCaprio D."/>
            <person name="Dooley K.T."/>
            <person name="Dorris L. III"/>
            <person name="Engels R."/>
            <person name="Gloeckner G."/>
            <person name="Hafez N."/>
            <person name="Hagopian D.S."/>
            <person name="Hall J.L."/>
            <person name="Ishikawa S.K."/>
            <person name="Jaffe D.B."/>
            <person name="Kamat A."/>
            <person name="Kudoh J."/>
            <person name="Lehmann R."/>
            <person name="Lokitsang T."/>
            <person name="Macdonald P."/>
            <person name="Major J.E."/>
            <person name="Matthews C.D."/>
            <person name="Mauceli E."/>
            <person name="Menzel U."/>
            <person name="Mihalev A.H."/>
            <person name="Minoshima S."/>
            <person name="Murayama Y."/>
            <person name="Naylor J.W."/>
            <person name="Nicol R."/>
            <person name="Nguyen C."/>
            <person name="O'Leary S.B."/>
            <person name="O'Neill K."/>
            <person name="Parker S.C.J."/>
            <person name="Polley A."/>
            <person name="Raymond C.K."/>
            <person name="Reichwald K."/>
            <person name="Rodriguez J."/>
            <person name="Sasaki T."/>
            <person name="Schilhabel M."/>
            <person name="Siddiqui R."/>
            <person name="Smith C.L."/>
            <person name="Sneddon T.P."/>
            <person name="Talamas J.A."/>
            <person name="Tenzin P."/>
            <person name="Topham K."/>
            <person name="Venkataraman V."/>
            <person name="Wen G."/>
            <person name="Yamazaki S."/>
            <person name="Young S.K."/>
            <person name="Zeng Q."/>
            <person name="Zimmer A.R."/>
            <person name="Rosenthal A."/>
            <person name="Birren B.W."/>
            <person name="Platzer M."/>
            <person name="Shimizu N."/>
            <person name="Lander E.S."/>
        </authorList>
    </citation>
    <scope>NUCLEOTIDE SEQUENCE [LARGE SCALE GENOMIC DNA]</scope>
</reference>
<reference key="4">
    <citation type="journal article" date="2003" name="Mol. Cell. Biol.">
        <title>Members of the large Maf transcription family regulate insulin gene transcription in islet beta cells.</title>
        <authorList>
            <person name="Matsuoka T.A."/>
            <person name="Zhao L."/>
            <person name="Artner I."/>
            <person name="Jarrett H.W."/>
            <person name="Friedman D."/>
            <person name="Means A."/>
            <person name="Stein R."/>
        </authorList>
    </citation>
    <scope>SUBCELLULAR LOCATION</scope>
    <scope>TISSUE SPECIFICITY</scope>
</reference>
<reference key="5">
    <citation type="journal article" date="2005" name="Biochim. Biophys. Acta">
        <title>Synergistic activation of the insulin gene promoter by the beta-cell enriched transcription factors MafA, Beta2, and Pdx1.</title>
        <authorList>
            <person name="Aramata S."/>
            <person name="Han S.I."/>
            <person name="Yasuda K."/>
            <person name="Kataoka K."/>
        </authorList>
    </citation>
    <scope>FUNCTION</scope>
</reference>
<reference key="6">
    <citation type="journal article" date="2017" name="Nat. Struct. Mol. Biol.">
        <title>Site-specific mapping of the human SUMO proteome reveals co-modification with phosphorylation.</title>
        <authorList>
            <person name="Hendriks I.A."/>
            <person name="Lyon D."/>
            <person name="Young C."/>
            <person name="Jensen L.J."/>
            <person name="Vertegaal A.C."/>
            <person name="Nielsen M.L."/>
        </authorList>
    </citation>
    <scope>SUMOYLATION [LARGE SCALE ANALYSIS] AT LYS-32</scope>
    <scope>IDENTIFICATION BY MASS SPECTROMETRY [LARGE SCALE ANALYSIS]</scope>
</reference>
<reference key="7">
    <citation type="journal article" date="2012" name="Biochemistry">
        <title>A novel DNA binding mechanism for maf basic region-leucine zipper factors inferred from a MafA-DNA complex structure and binding specificities.</title>
        <authorList>
            <person name="Lu X."/>
            <person name="Guanga G.P."/>
            <person name="Wan C."/>
            <person name="Rose R.B."/>
        </authorList>
    </citation>
    <scope>X-RAY CRYSTALLOGRAPHY (2.86 ANGSTROMS) OF 226-318 IN COMPLEX WITH DNA</scope>
    <scope>HOMODIMERIZATION</scope>
    <scope>DNA-BINDING</scope>
    <scope>FUNCTION</scope>
</reference>
<reference key="8">
    <citation type="journal article" date="2018" name="Proc. Natl. Acad. Sci. U.S.A.">
        <title>missense mutation causes familial insulinomatosis and diabetes mellitus.</title>
        <authorList>
            <person name="Iacovazzo D."/>
            <person name="Flanagan S.E."/>
            <person name="Walker E."/>
            <person name="Quezado R."/>
            <person name="de Sousa Barros F.A."/>
            <person name="Caswell R."/>
            <person name="Johnson M.B."/>
            <person name="Wakeling M."/>
            <person name="Braendle M."/>
            <person name="Guo M."/>
            <person name="Dang M.N."/>
            <person name="Gabrovska P."/>
            <person name="Niederle B."/>
            <person name="Christ E."/>
            <person name="Jenni S."/>
            <person name="Sipos B."/>
            <person name="Nieser M."/>
            <person name="Frilling A."/>
            <person name="Dhatariya K."/>
            <person name="Chanson P."/>
            <person name="de Herder W.W."/>
            <person name="Konukiewitz B."/>
            <person name="Kloeppel G."/>
            <person name="Stein R."/>
            <person name="Korbonits M."/>
            <person name="Ellard S."/>
        </authorList>
    </citation>
    <scope>INVOLVEMENT IN INSDM</scope>
    <scope>VARIANT INSDM PHE-64</scope>
    <scope>CHARACTERIZATION OF VARIANT INSDM PHE-64</scope>
</reference>
<name>MAFA_HUMAN</name>
<keyword id="KW-0002">3D-structure</keyword>
<keyword id="KW-0010">Activator</keyword>
<keyword id="KW-0219">Diabetes mellitus</keyword>
<keyword id="KW-0225">Disease variant</keyword>
<keyword id="KW-0238">DNA-binding</keyword>
<keyword id="KW-1017">Isopeptide bond</keyword>
<keyword id="KW-0539">Nucleus</keyword>
<keyword id="KW-0597">Phosphoprotein</keyword>
<keyword id="KW-1267">Proteomics identification</keyword>
<keyword id="KW-1185">Reference proteome</keyword>
<keyword id="KW-0804">Transcription</keyword>
<keyword id="KW-0805">Transcription regulation</keyword>
<keyword id="KW-0832">Ubl conjugation</keyword>
<organism>
    <name type="scientific">Homo sapiens</name>
    <name type="common">Human</name>
    <dbReference type="NCBI Taxonomy" id="9606"/>
    <lineage>
        <taxon>Eukaryota</taxon>
        <taxon>Metazoa</taxon>
        <taxon>Chordata</taxon>
        <taxon>Craniata</taxon>
        <taxon>Vertebrata</taxon>
        <taxon>Euteleostomi</taxon>
        <taxon>Mammalia</taxon>
        <taxon>Eutheria</taxon>
        <taxon>Euarchontoglires</taxon>
        <taxon>Primates</taxon>
        <taxon>Haplorrhini</taxon>
        <taxon>Catarrhini</taxon>
        <taxon>Hominidae</taxon>
        <taxon>Homo</taxon>
    </lineage>
</organism>
<accession>Q8NHW3</accession>
<comment type="function">
    <text evidence="5 7 8 9">Transcription factor that activates insulin gene expression (PubMed:12011435, PubMed:15993959). Acts synergistically with NEUROD1/BETA2 and PDX1 (PubMed:15993959). Binds the insulin enhancer C1/RIPE3b element (PubMed:12011435). Binds to consensus TRE-type MARE 5'-TGCTGACTCAGCA-3' DNA sequence (PubMed:23148532, PubMed:29339498).</text>
</comment>
<comment type="subunit">
    <text evidence="1 2 5 8">Forms homodimers or heterodimers (PubMed:12011435, PubMed:23148532). Monomers and dimers are able to bind DNA, but the off-rate is faster for monomers (PubMed:23148532). Interacts with NEUROD1 and PDX1 (By similarity). May interact with MAFB, FOS, JUN and PCAF (By similarity).</text>
</comment>
<comment type="subcellular location">
    <subcellularLocation>
        <location evidence="3 5 6">Nucleus</location>
    </subcellularLocation>
</comment>
<comment type="tissue specificity">
    <text evidence="6">Expressed in the islets of Langerhans (at protein level).</text>
</comment>
<comment type="PTM">
    <text evidence="1">Ubiquitinated, leading to its degradation by the proteasome.</text>
</comment>
<comment type="PTM">
    <text evidence="2">Phosphorylated at tyrosines.</text>
</comment>
<comment type="disease" evidence="9">
    <disease id="DI-05201">
        <name>Insulinomatosis and diabetes mellitus</name>
        <acronym>INSDM</acronym>
        <description>An autosomal dominant disorder characterized by the occurrence of multicentric insulinomas, hyperinsulinemic hypoglycemia, non insulin-dependent diabetes mellitus, and impaired glucose tolerance. Some patients also exhibit congenital cataract and/or congenital glaucoma.</description>
        <dbReference type="MIM" id="147630"/>
    </disease>
    <text>The disease is caused by variants affecting the gene represented in this entry.</text>
</comment>
<comment type="similarity">
    <text evidence="11">Belongs to the bZIP family. Maf subfamily.</text>
</comment>
<comment type="online information" name="Atlas of Genetics and Cytogenetics in Oncology and Haematology">
    <link uri="https://atlasgeneticsoncology.org/gene/41235/MAFA"/>
</comment>
<feature type="chain" id="PRO_0000320274" description="Transcription factor MafA">
    <location>
        <begin position="1"/>
        <end position="353"/>
    </location>
</feature>
<feature type="domain" description="bZIP" evidence="3">
    <location>
        <begin position="254"/>
        <end position="317"/>
    </location>
</feature>
<feature type="region of interest" description="Disordered" evidence="4">
    <location>
        <begin position="40"/>
        <end position="108"/>
    </location>
</feature>
<feature type="region of interest" description="Disordered" evidence="4">
    <location>
        <begin position="177"/>
        <end position="219"/>
    </location>
</feature>
<feature type="region of interest" description="Basic motif">
    <location>
        <begin position="254"/>
        <end position="279"/>
    </location>
</feature>
<feature type="region of interest" description="Leucine-zipper">
    <location>
        <begin position="282"/>
        <end position="303"/>
    </location>
</feature>
<feature type="region of interest" description="Disordered" evidence="4">
    <location>
        <begin position="315"/>
        <end position="353"/>
    </location>
</feature>
<feature type="compositionally biased region" description="Low complexity" evidence="4">
    <location>
        <begin position="46"/>
        <end position="73"/>
    </location>
</feature>
<feature type="compositionally biased region" description="Gly residues" evidence="4">
    <location>
        <begin position="74"/>
        <end position="93"/>
    </location>
</feature>
<feature type="compositionally biased region" description="Basic residues" evidence="4">
    <location>
        <begin position="183"/>
        <end position="210"/>
    </location>
</feature>
<feature type="compositionally biased region" description="Gly residues" evidence="4">
    <location>
        <begin position="319"/>
        <end position="330"/>
    </location>
</feature>
<feature type="modified residue" description="Phosphoserine" evidence="1">
    <location>
        <position position="14"/>
    </location>
</feature>
<feature type="modified residue" description="Phosphoserine" evidence="1">
    <location>
        <position position="49"/>
    </location>
</feature>
<feature type="modified residue" description="Phosphothreonine" evidence="1">
    <location>
        <position position="53"/>
    </location>
</feature>
<feature type="modified residue" description="Phosphothreonine" evidence="1">
    <location>
        <position position="57"/>
    </location>
</feature>
<feature type="modified residue" description="Phosphoserine" evidence="1">
    <location>
        <position position="61"/>
    </location>
</feature>
<feature type="modified residue" description="Phosphoserine" evidence="1">
    <location>
        <position position="65"/>
    </location>
</feature>
<feature type="cross-link" description="Glycyl lysine isopeptide (Lys-Gly) (interchain with G-Cter in SUMO2)" evidence="12">
    <location>
        <position position="32"/>
    </location>
</feature>
<feature type="sequence variant" id="VAR_080790" description="In INSDM; may prevent phosphorylation at S-65; may enhance protein stability; dbSNP:rs1554635488." evidence="9">
    <original>S</original>
    <variation>F</variation>
    <location>
        <position position="64"/>
    </location>
</feature>
<feature type="sequence conflict" description="In Ref. 1; BAC20389 and 2; AAL89527." evidence="11" ref="1 2">
    <location>
        <position position="199"/>
    </location>
</feature>
<feature type="helix" evidence="13">
    <location>
        <begin position="229"/>
        <end position="234"/>
    </location>
</feature>
<feature type="helix" evidence="13">
    <location>
        <begin position="237"/>
        <end position="243"/>
    </location>
</feature>
<feature type="turn" evidence="13">
    <location>
        <begin position="244"/>
        <end position="246"/>
    </location>
</feature>
<feature type="helix" evidence="13">
    <location>
        <begin position="249"/>
        <end position="316"/>
    </location>
</feature>
<proteinExistence type="evidence at protein level"/>